<sequence>MLELDFEQQLGDLYLQVNTQLPTEGITAVFGLSGAGKTSLINVIAGLIRPRKGRIVLNDHVLVDIEKGICLSPEQRRIGYVFQDARLFPHYRVKGNLQYGMSPEMKPEFDSIVSLLGIEHLLSRFPLTLSGGEKQRVAIGRALLTAPDLLLMDEPLASLDLPRKRELLPYLEKLSGEVNIPILYVSHNLDEILRLAENVLVVDNGKVRATGKLEEVWSSSALRLWLQKETLSSILNVSMVEHHNRYEMTAVALADQALWLPKMDVQPGTDLRIRIDASDVSLVLEPPRGSSIRNILAVKVVEFFDDNGHVDVKLVLSGHYLWARITPWARDELNLRSGQWLYAQIKSVSFHRQL</sequence>
<evidence type="ECO:0000255" key="1">
    <source>
        <dbReference type="HAMAP-Rule" id="MF_01705"/>
    </source>
</evidence>
<evidence type="ECO:0000255" key="2">
    <source>
        <dbReference type="PROSITE-ProRule" id="PRU01213"/>
    </source>
</evidence>
<accession>Q7N6R3</accession>
<gene>
    <name evidence="1" type="primary">modC</name>
    <name type="ordered locus">plu1478</name>
</gene>
<dbReference type="EC" id="7.3.2.5" evidence="1"/>
<dbReference type="EMBL" id="BX571864">
    <property type="protein sequence ID" value="CAE13771.1"/>
    <property type="molecule type" value="Genomic_DNA"/>
</dbReference>
<dbReference type="RefSeq" id="WP_011145781.1">
    <property type="nucleotide sequence ID" value="NC_005126.1"/>
</dbReference>
<dbReference type="SMR" id="Q7N6R3"/>
<dbReference type="STRING" id="243265.plu1478"/>
<dbReference type="GeneID" id="48847769"/>
<dbReference type="KEGG" id="plu:plu1478"/>
<dbReference type="eggNOG" id="COG4148">
    <property type="taxonomic scope" value="Bacteria"/>
</dbReference>
<dbReference type="HOGENOM" id="CLU_000604_1_1_6"/>
<dbReference type="OrthoDB" id="9802264at2"/>
<dbReference type="Proteomes" id="UP000002514">
    <property type="component" value="Chromosome"/>
</dbReference>
<dbReference type="GO" id="GO:0005886">
    <property type="term" value="C:plasma membrane"/>
    <property type="evidence" value="ECO:0007669"/>
    <property type="project" value="UniProtKB-SubCell"/>
</dbReference>
<dbReference type="GO" id="GO:0015412">
    <property type="term" value="F:ABC-type molybdate transporter activity"/>
    <property type="evidence" value="ECO:0007669"/>
    <property type="project" value="UniProtKB-EC"/>
</dbReference>
<dbReference type="GO" id="GO:0005524">
    <property type="term" value="F:ATP binding"/>
    <property type="evidence" value="ECO:0007669"/>
    <property type="project" value="UniProtKB-KW"/>
</dbReference>
<dbReference type="GO" id="GO:0016887">
    <property type="term" value="F:ATP hydrolysis activity"/>
    <property type="evidence" value="ECO:0007669"/>
    <property type="project" value="InterPro"/>
</dbReference>
<dbReference type="FunFam" id="3.40.50.300:FF:000634">
    <property type="entry name" value="Molybdenum import ATP-binding protein ModC"/>
    <property type="match status" value="1"/>
</dbReference>
<dbReference type="Gene3D" id="2.40.50.100">
    <property type="match status" value="1"/>
</dbReference>
<dbReference type="Gene3D" id="3.40.50.300">
    <property type="entry name" value="P-loop containing nucleotide triphosphate hydrolases"/>
    <property type="match status" value="1"/>
</dbReference>
<dbReference type="InterPro" id="IPR003593">
    <property type="entry name" value="AAA+_ATPase"/>
</dbReference>
<dbReference type="InterPro" id="IPR003439">
    <property type="entry name" value="ABC_transporter-like_ATP-bd"/>
</dbReference>
<dbReference type="InterPro" id="IPR017871">
    <property type="entry name" value="ABC_transporter-like_CS"/>
</dbReference>
<dbReference type="InterPro" id="IPR008995">
    <property type="entry name" value="Mo/tungstate-bd_C_term_dom"/>
</dbReference>
<dbReference type="InterPro" id="IPR011868">
    <property type="entry name" value="ModC_ABC_ATP-bd"/>
</dbReference>
<dbReference type="InterPro" id="IPR050334">
    <property type="entry name" value="Molybdenum_import_ModC"/>
</dbReference>
<dbReference type="InterPro" id="IPR004606">
    <property type="entry name" value="Mop_domain"/>
</dbReference>
<dbReference type="InterPro" id="IPR027417">
    <property type="entry name" value="P-loop_NTPase"/>
</dbReference>
<dbReference type="InterPro" id="IPR005116">
    <property type="entry name" value="Transp-assoc_OB_typ1"/>
</dbReference>
<dbReference type="NCBIfam" id="TIGR02142">
    <property type="entry name" value="modC_ABC"/>
    <property type="match status" value="1"/>
</dbReference>
<dbReference type="NCBIfam" id="NF008355">
    <property type="entry name" value="PRK11144.1"/>
    <property type="match status" value="1"/>
</dbReference>
<dbReference type="PANTHER" id="PTHR43514">
    <property type="entry name" value="ABC TRANSPORTER I FAMILY MEMBER 10"/>
    <property type="match status" value="1"/>
</dbReference>
<dbReference type="PANTHER" id="PTHR43514:SF4">
    <property type="entry name" value="ABC TRANSPORTER I FAMILY MEMBER 10"/>
    <property type="match status" value="1"/>
</dbReference>
<dbReference type="Pfam" id="PF00005">
    <property type="entry name" value="ABC_tran"/>
    <property type="match status" value="1"/>
</dbReference>
<dbReference type="Pfam" id="PF03459">
    <property type="entry name" value="TOBE"/>
    <property type="match status" value="1"/>
</dbReference>
<dbReference type="SMART" id="SM00382">
    <property type="entry name" value="AAA"/>
    <property type="match status" value="1"/>
</dbReference>
<dbReference type="SUPFAM" id="SSF50331">
    <property type="entry name" value="MOP-like"/>
    <property type="match status" value="1"/>
</dbReference>
<dbReference type="SUPFAM" id="SSF52540">
    <property type="entry name" value="P-loop containing nucleoside triphosphate hydrolases"/>
    <property type="match status" value="1"/>
</dbReference>
<dbReference type="PROSITE" id="PS00211">
    <property type="entry name" value="ABC_TRANSPORTER_1"/>
    <property type="match status" value="1"/>
</dbReference>
<dbReference type="PROSITE" id="PS50893">
    <property type="entry name" value="ABC_TRANSPORTER_2"/>
    <property type="match status" value="1"/>
</dbReference>
<dbReference type="PROSITE" id="PS51241">
    <property type="entry name" value="MODC"/>
    <property type="match status" value="1"/>
</dbReference>
<dbReference type="PROSITE" id="PS51866">
    <property type="entry name" value="MOP"/>
    <property type="match status" value="1"/>
</dbReference>
<proteinExistence type="inferred from homology"/>
<keyword id="KW-0067">ATP-binding</keyword>
<keyword id="KW-0997">Cell inner membrane</keyword>
<keyword id="KW-1003">Cell membrane</keyword>
<keyword id="KW-0472">Membrane</keyword>
<keyword id="KW-0500">Molybdenum</keyword>
<keyword id="KW-0547">Nucleotide-binding</keyword>
<keyword id="KW-1185">Reference proteome</keyword>
<keyword id="KW-1278">Translocase</keyword>
<keyword id="KW-0813">Transport</keyword>
<comment type="function">
    <text evidence="1">Part of the ABC transporter complex ModABC involved in molybdenum import. Responsible for energy coupling to the transport system.</text>
</comment>
<comment type="catalytic activity">
    <reaction evidence="1">
        <text>molybdate(out) + ATP + H2O = molybdate(in) + ADP + phosphate + H(+)</text>
        <dbReference type="Rhea" id="RHEA:22020"/>
        <dbReference type="ChEBI" id="CHEBI:15377"/>
        <dbReference type="ChEBI" id="CHEBI:15378"/>
        <dbReference type="ChEBI" id="CHEBI:30616"/>
        <dbReference type="ChEBI" id="CHEBI:36264"/>
        <dbReference type="ChEBI" id="CHEBI:43474"/>
        <dbReference type="ChEBI" id="CHEBI:456216"/>
        <dbReference type="EC" id="7.3.2.5"/>
    </reaction>
</comment>
<comment type="subunit">
    <text evidence="1">The complex is composed of two ATP-binding proteins (ModC), two transmembrane proteins (ModB) and a solute-binding protein (ModA).</text>
</comment>
<comment type="subcellular location">
    <subcellularLocation>
        <location evidence="1">Cell inner membrane</location>
        <topology evidence="1">Peripheral membrane protein</topology>
    </subcellularLocation>
</comment>
<comment type="similarity">
    <text evidence="1">Belongs to the ABC transporter superfamily. Molybdate importer (TC 3.A.1.8) family.</text>
</comment>
<organism>
    <name type="scientific">Photorhabdus laumondii subsp. laumondii (strain DSM 15139 / CIP 105565 / TT01)</name>
    <name type="common">Photorhabdus luminescens subsp. laumondii</name>
    <dbReference type="NCBI Taxonomy" id="243265"/>
    <lineage>
        <taxon>Bacteria</taxon>
        <taxon>Pseudomonadati</taxon>
        <taxon>Pseudomonadota</taxon>
        <taxon>Gammaproteobacteria</taxon>
        <taxon>Enterobacterales</taxon>
        <taxon>Morganellaceae</taxon>
        <taxon>Photorhabdus</taxon>
    </lineage>
</organism>
<feature type="chain" id="PRO_0000092546" description="Molybdenum import ATP-binding protein ModC">
    <location>
        <begin position="1"/>
        <end position="354"/>
    </location>
</feature>
<feature type="domain" description="ABC transporter" evidence="1">
    <location>
        <begin position="1"/>
        <end position="229"/>
    </location>
</feature>
<feature type="domain" description="Mop" evidence="2">
    <location>
        <begin position="289"/>
        <end position="354"/>
    </location>
</feature>
<feature type="binding site" evidence="1">
    <location>
        <begin position="31"/>
        <end position="38"/>
    </location>
    <ligand>
        <name>ATP</name>
        <dbReference type="ChEBI" id="CHEBI:30616"/>
    </ligand>
</feature>
<protein>
    <recommendedName>
        <fullName evidence="1">Molybdenum import ATP-binding protein ModC</fullName>
        <ecNumber evidence="1">7.3.2.5</ecNumber>
    </recommendedName>
</protein>
<name>MODC_PHOLL</name>
<reference key="1">
    <citation type="journal article" date="2003" name="Nat. Biotechnol.">
        <title>The genome sequence of the entomopathogenic bacterium Photorhabdus luminescens.</title>
        <authorList>
            <person name="Duchaud E."/>
            <person name="Rusniok C."/>
            <person name="Frangeul L."/>
            <person name="Buchrieser C."/>
            <person name="Givaudan A."/>
            <person name="Taourit S."/>
            <person name="Bocs S."/>
            <person name="Boursaux-Eude C."/>
            <person name="Chandler M."/>
            <person name="Charles J.-F."/>
            <person name="Dassa E."/>
            <person name="Derose R."/>
            <person name="Derzelle S."/>
            <person name="Freyssinet G."/>
            <person name="Gaudriault S."/>
            <person name="Medigue C."/>
            <person name="Lanois A."/>
            <person name="Powell K."/>
            <person name="Siguier P."/>
            <person name="Vincent R."/>
            <person name="Wingate V."/>
            <person name="Zouine M."/>
            <person name="Glaser P."/>
            <person name="Boemare N."/>
            <person name="Danchin A."/>
            <person name="Kunst F."/>
        </authorList>
    </citation>
    <scope>NUCLEOTIDE SEQUENCE [LARGE SCALE GENOMIC DNA]</scope>
    <source>
        <strain>DSM 15139 / CIP 105565 / TT01</strain>
    </source>
</reference>